<dbReference type="GO" id="GO:0005576">
    <property type="term" value="C:extracellular region"/>
    <property type="evidence" value="ECO:0007669"/>
    <property type="project" value="UniProtKB-SubCell"/>
</dbReference>
<dbReference type="GO" id="GO:0042742">
    <property type="term" value="P:defense response to bacterium"/>
    <property type="evidence" value="ECO:0007669"/>
    <property type="project" value="UniProtKB-KW"/>
</dbReference>
<dbReference type="InterPro" id="IPR022731">
    <property type="entry name" value="Dermaseptin_dom"/>
</dbReference>
<dbReference type="Pfam" id="PF12121">
    <property type="entry name" value="DD_K"/>
    <property type="match status" value="1"/>
</dbReference>
<comment type="function">
    <text evidence="1">Antibacterial activity against Gram-positive bacteria S.aureus and E.faecalis, and Gram-negative bacteria P.aeruginosa and E.coli.</text>
</comment>
<comment type="subcellular location">
    <subcellularLocation>
        <location evidence="1">Secreted</location>
    </subcellularLocation>
</comment>
<comment type="tissue specificity">
    <text evidence="1">Expressed by the skin glands.</text>
</comment>
<comment type="similarity">
    <text evidence="4">Belongs to the frog skin active peptide (FSAP) family. Dermaseptin subfamily.</text>
</comment>
<comment type="online information" name="The antimicrobial peptide database">
    <link uri="https://wangapd3.com/database/query_output.php?ID=0957"/>
</comment>
<feature type="peptide" id="PRO_0000044731" description="Dermaseptin-DI3">
    <location>
        <begin position="1"/>
        <end position="31"/>
    </location>
</feature>
<proteinExistence type="evidence at protein level"/>
<protein>
    <recommendedName>
        <fullName evidence="3">Dermaseptin-DI3</fullName>
        <shortName evidence="3">DRS-DI3</shortName>
    </recommendedName>
    <alternativeName>
        <fullName evidence="2">Dermadistinctin-M</fullName>
        <shortName evidence="2">DD M</shortName>
    </alternativeName>
</protein>
<name>DRS3_PHYDS</name>
<sequence>ALWKTMLKKLGTMALHAGKAAFGAAADTISQ</sequence>
<reference key="1">
    <citation type="journal article" date="1999" name="Peptides">
        <title>Antimicrobial peptides from the Brazilian frog Phyllomedusa distincta.</title>
        <authorList>
            <person name="Batista C.V.F."/>
            <person name="da Silva L.R."/>
            <person name="Sebben A."/>
            <person name="Scaloni A."/>
            <person name="Ferrara L."/>
            <person name="Paiva G.R."/>
            <person name="Olamendi-Portugal T."/>
            <person name="Possani L.D."/>
            <person name="Bloch C. Jr."/>
        </authorList>
    </citation>
    <scope>PROTEIN SEQUENCE</scope>
    <scope>FUNCTION</scope>
    <scope>SUBCELLULAR LOCATION</scope>
    <scope>TISSUE SPECIFICITY</scope>
    <source>
        <tissue>Skin secretion</tissue>
    </source>
</reference>
<reference key="2">
    <citation type="journal article" date="2008" name="Peptides">
        <title>A consistent nomenclature of antimicrobial peptides isolated from frogs of the subfamily Phyllomedusinae.</title>
        <authorList>
            <person name="Amiche M."/>
            <person name="Ladram A."/>
            <person name="Nicolas P."/>
        </authorList>
    </citation>
    <scope>NOMENCLATURE</scope>
</reference>
<accession>P83640</accession>
<evidence type="ECO:0000269" key="1">
    <source>
    </source>
</evidence>
<evidence type="ECO:0000303" key="2">
    <source>
    </source>
</evidence>
<evidence type="ECO:0000303" key="3">
    <source>
    </source>
</evidence>
<evidence type="ECO:0000305" key="4"/>
<keyword id="KW-0878">Amphibian defense peptide</keyword>
<keyword id="KW-0044">Antibiotic</keyword>
<keyword id="KW-0929">Antimicrobial</keyword>
<keyword id="KW-0903">Direct protein sequencing</keyword>
<keyword id="KW-0964">Secreted</keyword>
<organism>
    <name type="scientific">Phyllomedusa distincta</name>
    <name type="common">Monkey frog</name>
    <dbReference type="NCBI Taxonomy" id="164618"/>
    <lineage>
        <taxon>Eukaryota</taxon>
        <taxon>Metazoa</taxon>
        <taxon>Chordata</taxon>
        <taxon>Craniata</taxon>
        <taxon>Vertebrata</taxon>
        <taxon>Euteleostomi</taxon>
        <taxon>Amphibia</taxon>
        <taxon>Batrachia</taxon>
        <taxon>Anura</taxon>
        <taxon>Neobatrachia</taxon>
        <taxon>Hyloidea</taxon>
        <taxon>Hylidae</taxon>
        <taxon>Phyllomedusinae</taxon>
        <taxon>Phyllomedusa</taxon>
    </lineage>
</organism>